<name>IOLC_BACAH</name>
<feature type="chain" id="PRO_0000352291" description="5-dehydro-2-deoxygluconokinase">
    <location>
        <begin position="1"/>
        <end position="332"/>
    </location>
</feature>
<organism>
    <name type="scientific">Bacillus thuringiensis (strain Al Hakam)</name>
    <dbReference type="NCBI Taxonomy" id="412694"/>
    <lineage>
        <taxon>Bacteria</taxon>
        <taxon>Bacillati</taxon>
        <taxon>Bacillota</taxon>
        <taxon>Bacilli</taxon>
        <taxon>Bacillales</taxon>
        <taxon>Bacillaceae</taxon>
        <taxon>Bacillus</taxon>
        <taxon>Bacillus cereus group</taxon>
    </lineage>
</organism>
<comment type="function">
    <text evidence="1">Catalyzes the phosphorylation of 5-dehydro-2-deoxy-D-gluconate (2-deoxy-5-keto-D-gluconate or DKG) to 6-phospho-5-dehydro-2-deoxy-D-gluconate (DKGP).</text>
</comment>
<comment type="catalytic activity">
    <reaction evidence="1">
        <text>5-dehydro-2-deoxy-D-gluconate + ATP = 6-phospho-5-dehydro-2-deoxy-D-gluconate + ADP + H(+)</text>
        <dbReference type="Rhea" id="RHEA:13497"/>
        <dbReference type="ChEBI" id="CHEBI:15378"/>
        <dbReference type="ChEBI" id="CHEBI:16669"/>
        <dbReference type="ChEBI" id="CHEBI:30616"/>
        <dbReference type="ChEBI" id="CHEBI:57949"/>
        <dbReference type="ChEBI" id="CHEBI:456216"/>
        <dbReference type="EC" id="2.7.1.92"/>
    </reaction>
</comment>
<comment type="pathway">
    <text evidence="1">Polyol metabolism; myo-inositol degradation into acetyl-CoA; acetyl-CoA from myo-inositol: step 5/7.</text>
</comment>
<comment type="similarity">
    <text evidence="1">Belongs to the carbohydrate kinase PfkB family.</text>
</comment>
<comment type="sequence caution" evidence="2">
    <conflict type="erroneous initiation">
        <sequence resource="EMBL-CDS" id="ABK85557"/>
    </conflict>
</comment>
<reference key="1">
    <citation type="journal article" date="2007" name="J. Bacteriol.">
        <title>The complete genome sequence of Bacillus thuringiensis Al Hakam.</title>
        <authorList>
            <person name="Challacombe J.F."/>
            <person name="Altherr M.R."/>
            <person name="Xie G."/>
            <person name="Bhotika S.S."/>
            <person name="Brown N."/>
            <person name="Bruce D."/>
            <person name="Campbell C.S."/>
            <person name="Campbell M.L."/>
            <person name="Chen J."/>
            <person name="Chertkov O."/>
            <person name="Cleland C."/>
            <person name="Dimitrijevic M."/>
            <person name="Doggett N.A."/>
            <person name="Fawcett J.J."/>
            <person name="Glavina T."/>
            <person name="Goodwin L.A."/>
            <person name="Green L.D."/>
            <person name="Han C.S."/>
            <person name="Hill K.K."/>
            <person name="Hitchcock P."/>
            <person name="Jackson P.J."/>
            <person name="Keim P."/>
            <person name="Kewalramani A.R."/>
            <person name="Longmire J."/>
            <person name="Lucas S."/>
            <person name="Malfatti S."/>
            <person name="Martinez D."/>
            <person name="McMurry K."/>
            <person name="Meincke L.J."/>
            <person name="Misra M."/>
            <person name="Moseman B.L."/>
            <person name="Mundt M."/>
            <person name="Munk A.C."/>
            <person name="Okinaka R.T."/>
            <person name="Parson-Quintana B."/>
            <person name="Reilly L.P."/>
            <person name="Richardson P."/>
            <person name="Robinson D.L."/>
            <person name="Saunders E."/>
            <person name="Tapia R."/>
            <person name="Tesmer J.G."/>
            <person name="Thayer N."/>
            <person name="Thompson L.S."/>
            <person name="Tice H."/>
            <person name="Ticknor L.O."/>
            <person name="Wills P.L."/>
            <person name="Gilna P."/>
            <person name="Brettin T.S."/>
        </authorList>
    </citation>
    <scope>NUCLEOTIDE SEQUENCE [LARGE SCALE GENOMIC DNA]</scope>
    <source>
        <strain>Al Hakam</strain>
    </source>
</reference>
<gene>
    <name evidence="1" type="primary">iolC</name>
    <name type="ordered locus">BALH_2258</name>
</gene>
<accession>A0REB4</accession>
<proteinExistence type="inferred from homology"/>
<sequence>MNPLIFKEDRPLDLIAVGRLCVDLNANETQRPMEETKTFTKYVGGSPANIAIGASRLGLQTGFIGKVSDDQMGRFITGYLKDNKINTDQIHIDCTGAVTGLAFTEIKSPEDCSILMYRDNVADLNLDPTEVSEDYIKQSKALLISGTALAKSPSREAVFLALEYAHKHDVVVFFDVDYRPYTWQSEAETAVYYNLAAEKSDVIIGTREEFDMMEKLLNYEQSNDQVTAERWFSHYAKIVVIKHGGDGSIAYTRDGQSHRGGIFKTKVLKTFGAGDSYASAFIYGLMQGLEIPQAMRLGGASASIVISKHSCSDAMPTRAEISAFMETAEELV</sequence>
<keyword id="KW-0067">ATP-binding</keyword>
<keyword id="KW-0418">Kinase</keyword>
<keyword id="KW-0547">Nucleotide-binding</keyword>
<keyword id="KW-0808">Transferase</keyword>
<evidence type="ECO:0000255" key="1">
    <source>
        <dbReference type="HAMAP-Rule" id="MF_01668"/>
    </source>
</evidence>
<evidence type="ECO:0000305" key="2"/>
<protein>
    <recommendedName>
        <fullName evidence="1">5-dehydro-2-deoxygluconokinase</fullName>
        <ecNumber evidence="1">2.7.1.92</ecNumber>
    </recommendedName>
    <alternativeName>
        <fullName evidence="1">2-deoxy-5-keto-D-gluconate kinase</fullName>
        <shortName evidence="1">DKG kinase</shortName>
    </alternativeName>
</protein>
<dbReference type="EC" id="2.7.1.92" evidence="1"/>
<dbReference type="EMBL" id="CP000485">
    <property type="protein sequence ID" value="ABK85557.1"/>
    <property type="status" value="ALT_INIT"/>
    <property type="molecule type" value="Genomic_DNA"/>
</dbReference>
<dbReference type="RefSeq" id="WP_001068612.1">
    <property type="nucleotide sequence ID" value="NC_008600.1"/>
</dbReference>
<dbReference type="SMR" id="A0REB4"/>
<dbReference type="KEGG" id="btl:BALH_2258"/>
<dbReference type="HOGENOM" id="CLU_027634_6_0_9"/>
<dbReference type="UniPathway" id="UPA00076">
    <property type="reaction ID" value="UER00146"/>
</dbReference>
<dbReference type="GO" id="GO:0047590">
    <property type="term" value="F:5-dehydro-2-deoxygluconokinase activity"/>
    <property type="evidence" value="ECO:0007669"/>
    <property type="project" value="UniProtKB-UniRule"/>
</dbReference>
<dbReference type="GO" id="GO:0005524">
    <property type="term" value="F:ATP binding"/>
    <property type="evidence" value="ECO:0007669"/>
    <property type="project" value="UniProtKB-UniRule"/>
</dbReference>
<dbReference type="GO" id="GO:0019310">
    <property type="term" value="P:inositol catabolic process"/>
    <property type="evidence" value="ECO:0007669"/>
    <property type="project" value="UniProtKB-UniRule"/>
</dbReference>
<dbReference type="CDD" id="cd01166">
    <property type="entry name" value="KdgK"/>
    <property type="match status" value="1"/>
</dbReference>
<dbReference type="Gene3D" id="3.40.1190.20">
    <property type="match status" value="1"/>
</dbReference>
<dbReference type="Gene3D" id="2.20.150.10">
    <property type="entry name" value="putative 5-dehydro-2- deoxygluconokinase"/>
    <property type="match status" value="1"/>
</dbReference>
<dbReference type="HAMAP" id="MF_01668">
    <property type="entry name" value="IolC"/>
    <property type="match status" value="1"/>
</dbReference>
<dbReference type="InterPro" id="IPR002173">
    <property type="entry name" value="Carboh/pur_kinase_PfkB_CS"/>
</dbReference>
<dbReference type="InterPro" id="IPR022841">
    <property type="entry name" value="DKG_kinase_firmi"/>
</dbReference>
<dbReference type="InterPro" id="IPR030830">
    <property type="entry name" value="Myo_inos_IolC"/>
</dbReference>
<dbReference type="InterPro" id="IPR023314">
    <property type="entry name" value="Myo_inos_IolC-like_sf"/>
</dbReference>
<dbReference type="InterPro" id="IPR050306">
    <property type="entry name" value="PfkB_Carbo_kinase"/>
</dbReference>
<dbReference type="InterPro" id="IPR011611">
    <property type="entry name" value="PfkB_dom"/>
</dbReference>
<dbReference type="InterPro" id="IPR029056">
    <property type="entry name" value="Ribokinase-like"/>
</dbReference>
<dbReference type="NCBIfam" id="TIGR04382">
    <property type="entry name" value="myo_inos_iolC_N"/>
    <property type="match status" value="1"/>
</dbReference>
<dbReference type="PANTHER" id="PTHR43085:SF49">
    <property type="entry name" value="5-DEHYDRO-2-DEOXYGLUCONOKINASE"/>
    <property type="match status" value="1"/>
</dbReference>
<dbReference type="PANTHER" id="PTHR43085">
    <property type="entry name" value="HEXOKINASE FAMILY MEMBER"/>
    <property type="match status" value="1"/>
</dbReference>
<dbReference type="Pfam" id="PF00294">
    <property type="entry name" value="PfkB"/>
    <property type="match status" value="1"/>
</dbReference>
<dbReference type="SUPFAM" id="SSF53613">
    <property type="entry name" value="Ribokinase-like"/>
    <property type="match status" value="1"/>
</dbReference>
<dbReference type="PROSITE" id="PS00584">
    <property type="entry name" value="PFKB_KINASES_2"/>
    <property type="match status" value="1"/>
</dbReference>